<proteinExistence type="evidence at transcript level"/>
<protein>
    <recommendedName>
        <fullName>Pentatricopeptide repeat-containing protein At1g33350</fullName>
    </recommendedName>
</protein>
<feature type="chain" id="PRO_0000342811" description="Pentatricopeptide repeat-containing protein At1g33350">
    <location>
        <begin position="1"/>
        <end position="538"/>
    </location>
</feature>
<feature type="repeat" description="PPR 1">
    <location>
        <begin position="87"/>
        <end position="123"/>
    </location>
</feature>
<feature type="repeat" description="PPR 2">
    <location>
        <begin position="125"/>
        <end position="159"/>
    </location>
</feature>
<feature type="repeat" description="PPR 3">
    <location>
        <begin position="160"/>
        <end position="191"/>
    </location>
</feature>
<feature type="repeat" description="PPR 4">
    <location>
        <begin position="192"/>
        <end position="226"/>
    </location>
</feature>
<feature type="repeat" description="PPR 5">
    <location>
        <begin position="227"/>
        <end position="253"/>
    </location>
</feature>
<feature type="repeat" description="PPR 6">
    <location>
        <begin position="259"/>
        <end position="293"/>
    </location>
</feature>
<feature type="repeat" description="PPR 7">
    <location>
        <begin position="294"/>
        <end position="324"/>
    </location>
</feature>
<feature type="repeat" description="PPR 8">
    <location>
        <begin position="325"/>
        <end position="359"/>
    </location>
</feature>
<feature type="repeat" description="PPR 9">
    <location>
        <begin position="363"/>
        <end position="398"/>
    </location>
</feature>
<feature type="repeat" description="PPR 10">
    <location>
        <begin position="399"/>
        <end position="433"/>
    </location>
</feature>
<feature type="region of interest" description="Type E motif">
    <location>
        <begin position="434"/>
        <end position="509"/>
    </location>
</feature>
<feature type="sequence conflict" description="In Ref. 3; BAC43004 and 4; BAD94775." evidence="1" ref="3 4">
    <original>S</original>
    <variation>Y</variation>
    <location>
        <position position="316"/>
    </location>
</feature>
<gene>
    <name type="primary">PCMP-E57</name>
    <name type="ordered locus">At1g33350</name>
    <name type="ORF">F10C21.4</name>
    <name type="ORF">T16O9.9</name>
</gene>
<keyword id="KW-1185">Reference proteome</keyword>
<keyword id="KW-0677">Repeat</keyword>
<accession>Q9C501</accession>
<accession>Q8GX76</accession>
<sequence length="538" mass="60474">MGTRVTQFSYLHAPSSHMAEQLLNQFISAVISKSRHLNHLKQVQSFMIVSGLSHSHFLCFKLLRFCTLRLCNLSYARFIFDRFSFPNTHLYAAVLTAYSSSLPLHASSAFSFFRLMVNRSVPRPNHFIYPLVLKSTPYLSSAFSTPLVHTHLFKSGFHLYVVVQTALLHSYASSVSHITLARQLFDEMSERNVVSWTAMLSGYARSGDISNAVALFEDMPERDVPSWNAILAACTQNGLFLEAVSLFRRMINEPSIRPNEVTVVCVLSACAQTGTLQLAKGIHAFAYRRDLSSDVFVSNSLVDLYGKCGNLEEASSVFKMASKKSLTAWNSMINCFALHGRSEEAIAVFEEMMKLNINDIKPDHITFIGLLNACTHGGLVSKGRGYFDLMTNRFGIEPRIEHYGCLIDLLGRAGRFDEALEVMSTMKMKADEAIWGSLLNACKIHGHLDLAEVAVKNLVALNPNNGGYVAMMANLYGEMGNWEEARRARKMIKHQNAYKPPGWSRIEIDNEVHQFYSLDKSHPETEEIYMILDSLISF</sequence>
<evidence type="ECO:0000305" key="1"/>
<name>PPR70_ARATH</name>
<comment type="similarity">
    <text evidence="1">Belongs to the PPR family. PCMP-E subfamily.</text>
</comment>
<comment type="sequence caution" evidence="1">
    <conflict type="erroneous initiation">
        <sequence resource="EMBL-CDS" id="BAC43004"/>
    </conflict>
</comment>
<comment type="online information" name="Pentatricopeptide repeat proteins">
    <link uri="https://ppr.plantenergy.uwa.edu.au"/>
</comment>
<organism>
    <name type="scientific">Arabidopsis thaliana</name>
    <name type="common">Mouse-ear cress</name>
    <dbReference type="NCBI Taxonomy" id="3702"/>
    <lineage>
        <taxon>Eukaryota</taxon>
        <taxon>Viridiplantae</taxon>
        <taxon>Streptophyta</taxon>
        <taxon>Embryophyta</taxon>
        <taxon>Tracheophyta</taxon>
        <taxon>Spermatophyta</taxon>
        <taxon>Magnoliopsida</taxon>
        <taxon>eudicotyledons</taxon>
        <taxon>Gunneridae</taxon>
        <taxon>Pentapetalae</taxon>
        <taxon>rosids</taxon>
        <taxon>malvids</taxon>
        <taxon>Brassicales</taxon>
        <taxon>Brassicaceae</taxon>
        <taxon>Camelineae</taxon>
        <taxon>Arabidopsis</taxon>
    </lineage>
</organism>
<dbReference type="EMBL" id="AC027035">
    <property type="protein sequence ID" value="AAG51281.1"/>
    <property type="molecule type" value="Genomic_DNA"/>
</dbReference>
<dbReference type="EMBL" id="AC051630">
    <property type="protein sequence ID" value="AAG51215.1"/>
    <property type="molecule type" value="Genomic_DNA"/>
</dbReference>
<dbReference type="EMBL" id="CP002684">
    <property type="protein sequence ID" value="AEE31586.1"/>
    <property type="molecule type" value="Genomic_DNA"/>
</dbReference>
<dbReference type="EMBL" id="CP002684">
    <property type="protein sequence ID" value="ANM61056.1"/>
    <property type="molecule type" value="Genomic_DNA"/>
</dbReference>
<dbReference type="EMBL" id="AK118395">
    <property type="protein sequence ID" value="BAC43004.1"/>
    <property type="status" value="ALT_INIT"/>
    <property type="molecule type" value="mRNA"/>
</dbReference>
<dbReference type="EMBL" id="AK222040">
    <property type="protein sequence ID" value="BAD94775.1"/>
    <property type="molecule type" value="mRNA"/>
</dbReference>
<dbReference type="EMBL" id="BT005240">
    <property type="protein sequence ID" value="AAO63304.1"/>
    <property type="molecule type" value="mRNA"/>
</dbReference>
<dbReference type="PIR" id="C86457">
    <property type="entry name" value="C86457"/>
</dbReference>
<dbReference type="RefSeq" id="NP_001323298.1">
    <property type="nucleotide sequence ID" value="NM_001333038.1"/>
</dbReference>
<dbReference type="RefSeq" id="NP_174603.1">
    <property type="nucleotide sequence ID" value="NM_103062.2"/>
</dbReference>
<dbReference type="SMR" id="Q9C501"/>
<dbReference type="FunCoup" id="Q9C501">
    <property type="interactions" value="819"/>
</dbReference>
<dbReference type="STRING" id="3702.Q9C501"/>
<dbReference type="PaxDb" id="3702-AT1G33350.1"/>
<dbReference type="ProteomicsDB" id="226163"/>
<dbReference type="EnsemblPlants" id="AT1G33350.1">
    <property type="protein sequence ID" value="AT1G33350.1"/>
    <property type="gene ID" value="AT1G33350"/>
</dbReference>
<dbReference type="EnsemblPlants" id="AT1G33350.2">
    <property type="protein sequence ID" value="AT1G33350.2"/>
    <property type="gene ID" value="AT1G33350"/>
</dbReference>
<dbReference type="GeneID" id="840229"/>
<dbReference type="Gramene" id="AT1G33350.1">
    <property type="protein sequence ID" value="AT1G33350.1"/>
    <property type="gene ID" value="AT1G33350"/>
</dbReference>
<dbReference type="Gramene" id="AT1G33350.2">
    <property type="protein sequence ID" value="AT1G33350.2"/>
    <property type="gene ID" value="AT1G33350"/>
</dbReference>
<dbReference type="KEGG" id="ath:AT1G33350"/>
<dbReference type="Araport" id="AT1G33350"/>
<dbReference type="TAIR" id="AT1G33350"/>
<dbReference type="eggNOG" id="KOG4197">
    <property type="taxonomic scope" value="Eukaryota"/>
</dbReference>
<dbReference type="HOGENOM" id="CLU_002706_0_1_1"/>
<dbReference type="InParanoid" id="Q9C501"/>
<dbReference type="OMA" id="NHFIYPH"/>
<dbReference type="OrthoDB" id="597215at2759"/>
<dbReference type="PhylomeDB" id="Q9C501"/>
<dbReference type="PRO" id="PR:Q9C501"/>
<dbReference type="Proteomes" id="UP000006548">
    <property type="component" value="Chromosome 1"/>
</dbReference>
<dbReference type="ExpressionAtlas" id="Q9C501">
    <property type="expression patterns" value="baseline and differential"/>
</dbReference>
<dbReference type="GO" id="GO:0003723">
    <property type="term" value="F:RNA binding"/>
    <property type="evidence" value="ECO:0007669"/>
    <property type="project" value="InterPro"/>
</dbReference>
<dbReference type="GO" id="GO:0009451">
    <property type="term" value="P:RNA modification"/>
    <property type="evidence" value="ECO:0007669"/>
    <property type="project" value="InterPro"/>
</dbReference>
<dbReference type="FunFam" id="1.25.40.10:FF:000348">
    <property type="entry name" value="Pentatricopeptide repeat-containing protein chloroplastic"/>
    <property type="match status" value="1"/>
</dbReference>
<dbReference type="FunFam" id="1.25.40.10:FF:000277">
    <property type="entry name" value="Pentatricopeptide repeat-containing protein, mitochondrial"/>
    <property type="match status" value="1"/>
</dbReference>
<dbReference type="Gene3D" id="1.25.40.10">
    <property type="entry name" value="Tetratricopeptide repeat domain"/>
    <property type="match status" value="3"/>
</dbReference>
<dbReference type="InterPro" id="IPR046848">
    <property type="entry name" value="E_motif"/>
</dbReference>
<dbReference type="InterPro" id="IPR002885">
    <property type="entry name" value="Pentatricopeptide_rpt"/>
</dbReference>
<dbReference type="InterPro" id="IPR046960">
    <property type="entry name" value="PPR_At4g14850-like_plant"/>
</dbReference>
<dbReference type="InterPro" id="IPR011990">
    <property type="entry name" value="TPR-like_helical_dom_sf"/>
</dbReference>
<dbReference type="NCBIfam" id="TIGR00756">
    <property type="entry name" value="PPR"/>
    <property type="match status" value="4"/>
</dbReference>
<dbReference type="PANTHER" id="PTHR47926:SF453">
    <property type="entry name" value="PENTATRICOPEPTIDE REPEAT (PPR) SUPERFAMILY PROTEIN"/>
    <property type="match status" value="1"/>
</dbReference>
<dbReference type="PANTHER" id="PTHR47926">
    <property type="entry name" value="PENTATRICOPEPTIDE REPEAT-CONTAINING PROTEIN"/>
    <property type="match status" value="1"/>
</dbReference>
<dbReference type="Pfam" id="PF20431">
    <property type="entry name" value="E_motif"/>
    <property type="match status" value="1"/>
</dbReference>
<dbReference type="Pfam" id="PF01535">
    <property type="entry name" value="PPR"/>
    <property type="match status" value="4"/>
</dbReference>
<dbReference type="Pfam" id="PF13041">
    <property type="entry name" value="PPR_2"/>
    <property type="match status" value="1"/>
</dbReference>
<dbReference type="SUPFAM" id="SSF48452">
    <property type="entry name" value="TPR-like"/>
    <property type="match status" value="1"/>
</dbReference>
<dbReference type="PROSITE" id="PS51375">
    <property type="entry name" value="PPR"/>
    <property type="match status" value="10"/>
</dbReference>
<reference key="1">
    <citation type="journal article" date="2000" name="Nature">
        <title>Sequence and analysis of chromosome 1 of the plant Arabidopsis thaliana.</title>
        <authorList>
            <person name="Theologis A."/>
            <person name="Ecker J.R."/>
            <person name="Palm C.J."/>
            <person name="Federspiel N.A."/>
            <person name="Kaul S."/>
            <person name="White O."/>
            <person name="Alonso J."/>
            <person name="Altafi H."/>
            <person name="Araujo R."/>
            <person name="Bowman C.L."/>
            <person name="Brooks S.Y."/>
            <person name="Buehler E."/>
            <person name="Chan A."/>
            <person name="Chao Q."/>
            <person name="Chen H."/>
            <person name="Cheuk R.F."/>
            <person name="Chin C.W."/>
            <person name="Chung M.K."/>
            <person name="Conn L."/>
            <person name="Conway A.B."/>
            <person name="Conway A.R."/>
            <person name="Creasy T.H."/>
            <person name="Dewar K."/>
            <person name="Dunn P."/>
            <person name="Etgu P."/>
            <person name="Feldblyum T.V."/>
            <person name="Feng J.-D."/>
            <person name="Fong B."/>
            <person name="Fujii C.Y."/>
            <person name="Gill J.E."/>
            <person name="Goldsmith A.D."/>
            <person name="Haas B."/>
            <person name="Hansen N.F."/>
            <person name="Hughes B."/>
            <person name="Huizar L."/>
            <person name="Hunter J.L."/>
            <person name="Jenkins J."/>
            <person name="Johnson-Hopson C."/>
            <person name="Khan S."/>
            <person name="Khaykin E."/>
            <person name="Kim C.J."/>
            <person name="Koo H.L."/>
            <person name="Kremenetskaia I."/>
            <person name="Kurtz D.B."/>
            <person name="Kwan A."/>
            <person name="Lam B."/>
            <person name="Langin-Hooper S."/>
            <person name="Lee A."/>
            <person name="Lee J.M."/>
            <person name="Lenz C.A."/>
            <person name="Li J.H."/>
            <person name="Li Y.-P."/>
            <person name="Lin X."/>
            <person name="Liu S.X."/>
            <person name="Liu Z.A."/>
            <person name="Luros J.S."/>
            <person name="Maiti R."/>
            <person name="Marziali A."/>
            <person name="Militscher J."/>
            <person name="Miranda M."/>
            <person name="Nguyen M."/>
            <person name="Nierman W.C."/>
            <person name="Osborne B.I."/>
            <person name="Pai G."/>
            <person name="Peterson J."/>
            <person name="Pham P.K."/>
            <person name="Rizzo M."/>
            <person name="Rooney T."/>
            <person name="Rowley D."/>
            <person name="Sakano H."/>
            <person name="Salzberg S.L."/>
            <person name="Schwartz J.R."/>
            <person name="Shinn P."/>
            <person name="Southwick A.M."/>
            <person name="Sun H."/>
            <person name="Tallon L.J."/>
            <person name="Tambunga G."/>
            <person name="Toriumi M.J."/>
            <person name="Town C.D."/>
            <person name="Utterback T."/>
            <person name="Van Aken S."/>
            <person name="Vaysberg M."/>
            <person name="Vysotskaia V.S."/>
            <person name="Walker M."/>
            <person name="Wu D."/>
            <person name="Yu G."/>
            <person name="Fraser C.M."/>
            <person name="Venter J.C."/>
            <person name="Davis R.W."/>
        </authorList>
    </citation>
    <scope>NUCLEOTIDE SEQUENCE [LARGE SCALE GENOMIC DNA]</scope>
    <source>
        <strain>cv. Columbia</strain>
    </source>
</reference>
<reference key="2">
    <citation type="journal article" date="2017" name="Plant J.">
        <title>Araport11: a complete reannotation of the Arabidopsis thaliana reference genome.</title>
        <authorList>
            <person name="Cheng C.Y."/>
            <person name="Krishnakumar V."/>
            <person name="Chan A.P."/>
            <person name="Thibaud-Nissen F."/>
            <person name="Schobel S."/>
            <person name="Town C.D."/>
        </authorList>
    </citation>
    <scope>GENOME REANNOTATION</scope>
    <source>
        <strain>cv. Columbia</strain>
    </source>
</reference>
<reference key="3">
    <citation type="journal article" date="2002" name="Science">
        <title>Functional annotation of a full-length Arabidopsis cDNA collection.</title>
        <authorList>
            <person name="Seki M."/>
            <person name="Narusaka M."/>
            <person name="Kamiya A."/>
            <person name="Ishida J."/>
            <person name="Satou M."/>
            <person name="Sakurai T."/>
            <person name="Nakajima M."/>
            <person name="Enju A."/>
            <person name="Akiyama K."/>
            <person name="Oono Y."/>
            <person name="Muramatsu M."/>
            <person name="Hayashizaki Y."/>
            <person name="Kawai J."/>
            <person name="Carninci P."/>
            <person name="Itoh M."/>
            <person name="Ishii Y."/>
            <person name="Arakawa T."/>
            <person name="Shibata K."/>
            <person name="Shinagawa A."/>
            <person name="Shinozaki K."/>
        </authorList>
    </citation>
    <scope>NUCLEOTIDE SEQUENCE [LARGE SCALE MRNA] OF 313-538</scope>
    <source>
        <strain>cv. Columbia</strain>
    </source>
</reference>
<reference key="4">
    <citation type="submission" date="2005-03" db="EMBL/GenBank/DDBJ databases">
        <title>Large-scale analysis of RIKEN Arabidopsis full-length (RAFL) cDNAs.</title>
        <authorList>
            <person name="Totoki Y."/>
            <person name="Seki M."/>
            <person name="Ishida J."/>
            <person name="Nakajima M."/>
            <person name="Enju A."/>
            <person name="Kamiya A."/>
            <person name="Narusaka M."/>
            <person name="Shin-i T."/>
            <person name="Nakagawa M."/>
            <person name="Sakamoto N."/>
            <person name="Oishi K."/>
            <person name="Kohara Y."/>
            <person name="Kobayashi M."/>
            <person name="Toyoda A."/>
            <person name="Sakaki Y."/>
            <person name="Sakurai T."/>
            <person name="Iida K."/>
            <person name="Akiyama K."/>
            <person name="Satou M."/>
            <person name="Toyoda T."/>
            <person name="Konagaya A."/>
            <person name="Carninci P."/>
            <person name="Kawai J."/>
            <person name="Hayashizaki Y."/>
            <person name="Shinozaki K."/>
        </authorList>
    </citation>
    <scope>NUCLEOTIDE SEQUENCE [LARGE SCALE MRNA] OF 313-538</scope>
    <source>
        <strain>cv. Columbia</strain>
    </source>
</reference>
<reference key="5">
    <citation type="journal article" date="2003" name="Science">
        <title>Empirical analysis of transcriptional activity in the Arabidopsis genome.</title>
        <authorList>
            <person name="Yamada K."/>
            <person name="Lim J."/>
            <person name="Dale J.M."/>
            <person name="Chen H."/>
            <person name="Shinn P."/>
            <person name="Palm C.J."/>
            <person name="Southwick A.M."/>
            <person name="Wu H.C."/>
            <person name="Kim C.J."/>
            <person name="Nguyen M."/>
            <person name="Pham P.K."/>
            <person name="Cheuk R.F."/>
            <person name="Karlin-Newmann G."/>
            <person name="Liu S.X."/>
            <person name="Lam B."/>
            <person name="Sakano H."/>
            <person name="Wu T."/>
            <person name="Yu G."/>
            <person name="Miranda M."/>
            <person name="Quach H.L."/>
            <person name="Tripp M."/>
            <person name="Chang C.H."/>
            <person name="Lee J.M."/>
            <person name="Toriumi M.J."/>
            <person name="Chan M.M."/>
            <person name="Tang C.C."/>
            <person name="Onodera C.S."/>
            <person name="Deng J.M."/>
            <person name="Akiyama K."/>
            <person name="Ansari Y."/>
            <person name="Arakawa T."/>
            <person name="Banh J."/>
            <person name="Banno F."/>
            <person name="Bowser L."/>
            <person name="Brooks S.Y."/>
            <person name="Carninci P."/>
            <person name="Chao Q."/>
            <person name="Choy N."/>
            <person name="Enju A."/>
            <person name="Goldsmith A.D."/>
            <person name="Gurjal M."/>
            <person name="Hansen N.F."/>
            <person name="Hayashizaki Y."/>
            <person name="Johnson-Hopson C."/>
            <person name="Hsuan V.W."/>
            <person name="Iida K."/>
            <person name="Karnes M."/>
            <person name="Khan S."/>
            <person name="Koesema E."/>
            <person name="Ishida J."/>
            <person name="Jiang P.X."/>
            <person name="Jones T."/>
            <person name="Kawai J."/>
            <person name="Kamiya A."/>
            <person name="Meyers C."/>
            <person name="Nakajima M."/>
            <person name="Narusaka M."/>
            <person name="Seki M."/>
            <person name="Sakurai T."/>
            <person name="Satou M."/>
            <person name="Tamse R."/>
            <person name="Vaysberg M."/>
            <person name="Wallender E.K."/>
            <person name="Wong C."/>
            <person name="Yamamura Y."/>
            <person name="Yuan S."/>
            <person name="Shinozaki K."/>
            <person name="Davis R.W."/>
            <person name="Theologis A."/>
            <person name="Ecker J.R."/>
        </authorList>
    </citation>
    <scope>NUCLEOTIDE SEQUENCE [LARGE SCALE MRNA] OF 320-538</scope>
    <source>
        <strain>cv. Columbia</strain>
    </source>
</reference>
<reference key="6">
    <citation type="journal article" date="2004" name="Plant Cell">
        <title>Genome-wide analysis of Arabidopsis pentatricopeptide repeat proteins reveals their essential role in organelle biogenesis.</title>
        <authorList>
            <person name="Lurin C."/>
            <person name="Andres C."/>
            <person name="Aubourg S."/>
            <person name="Bellaoui M."/>
            <person name="Bitton F."/>
            <person name="Bruyere C."/>
            <person name="Caboche M."/>
            <person name="Debast C."/>
            <person name="Gualberto J."/>
            <person name="Hoffmann B."/>
            <person name="Lecharny A."/>
            <person name="Le Ret M."/>
            <person name="Martin-Magniette M.-L."/>
            <person name="Mireau H."/>
            <person name="Peeters N."/>
            <person name="Renou J.-P."/>
            <person name="Szurek B."/>
            <person name="Taconnat L."/>
            <person name="Small I."/>
        </authorList>
    </citation>
    <scope>GENE FAMILY</scope>
</reference>